<comment type="function">
    <text evidence="4">Component of the ribosome, a large ribonucleoprotein complex responsible for the synthesis of proteins in the cell. The small ribosomal subunit (SSU) binds messenger RNAs (mRNAs) and translates the encoded message by selecting cognate aminoacyl-transfer RNA (tRNA) molecules. The large subunit (LSU) contains the ribosomal catalytic site termed the peptidyl transferase center (PTC), which catalyzes the formation of peptide bonds, thereby polymerizing the amino acids delivered by tRNAs into a polypeptide chain. The nascent polypeptides leave the ribosome through a tunnel in the LSU and interact with protein factors that function in enzymatic processing, targeting, and the membrane insertion of nascent chains at the exit of the ribosomal tunnel.</text>
</comment>
<comment type="cofactor">
    <cofactor evidence="1">
        <name>Zn(2+)</name>
        <dbReference type="ChEBI" id="CHEBI:29105"/>
    </cofactor>
</comment>
<comment type="subunit">
    <text evidence="1">Component of the large ribosomal subunit (PubMed:35613268). Mature ribosomes consist of a small (40S) and a large (60S) subunit (PubMed:35613268). The 40S subunit contains about 32 different proteins and 1 molecule of RNA (18S) (PubMed:35613268). The 60S subunit contains 45 different proteins and 3 molecules of RNA (25S, 5.8S and 5S) (PubMed:35613268).</text>
</comment>
<comment type="subcellular location">
    <subcellularLocation>
        <location evidence="4">Cytoplasm</location>
    </subcellularLocation>
</comment>
<comment type="miscellaneous">
    <text evidence="1">Candida albicans is resistant to cycloheximide (CHX), which binds to the ribosomal E-tRNA binding site (E-site). This resistance is caused by a natural substitution P56Q in ribosomal protein RPL42, which decreases the volume of the binding pocket and prevents the binding of inhibitors such as CHX.</text>
</comment>
<comment type="similarity">
    <text evidence="3">Belongs to the eukaryotic ribosomal protein eL42 family.</text>
</comment>
<organism>
    <name type="scientific">Candida albicans (strain SC5314 / ATCC MYA-2876)</name>
    <name type="common">Yeast</name>
    <dbReference type="NCBI Taxonomy" id="237561"/>
    <lineage>
        <taxon>Eukaryota</taxon>
        <taxon>Fungi</taxon>
        <taxon>Dikarya</taxon>
        <taxon>Ascomycota</taxon>
        <taxon>Saccharomycotina</taxon>
        <taxon>Pichiomycetes</taxon>
        <taxon>Debaryomycetaceae</taxon>
        <taxon>Candida/Lodderomyces clade</taxon>
        <taxon>Candida</taxon>
    </lineage>
</organism>
<protein>
    <recommendedName>
        <fullName evidence="2">Large ribosomal subunit protein eL42</fullName>
    </recommendedName>
    <alternativeName>
        <fullName>60S ribosomal protein L44</fullName>
    </alternativeName>
</protein>
<proteinExistence type="evidence at protein level"/>
<feature type="chain" id="PRO_0000456498" description="Large ribosomal subunit protein eL42">
    <location>
        <begin position="1"/>
        <end position="106"/>
    </location>
</feature>
<feature type="binding site" evidence="1 5">
    <location>
        <position position="12"/>
    </location>
    <ligand>
        <name>Zn(2+)</name>
        <dbReference type="ChEBI" id="CHEBI:29105"/>
        <label>201</label>
    </ligand>
</feature>
<feature type="binding site" evidence="1 5">
    <location>
        <position position="17"/>
    </location>
    <ligand>
        <name>Zn(2+)</name>
        <dbReference type="ChEBI" id="CHEBI:29105"/>
        <label>201</label>
    </ligand>
</feature>
<feature type="binding site" evidence="1 5">
    <location>
        <position position="74"/>
    </location>
    <ligand>
        <name>Zn(2+)</name>
        <dbReference type="ChEBI" id="CHEBI:29105"/>
        <label>201</label>
    </ligand>
</feature>
<feature type="binding site" evidence="1 5">
    <location>
        <position position="77"/>
    </location>
    <ligand>
        <name>Zn(2+)</name>
        <dbReference type="ChEBI" id="CHEBI:29105"/>
        <label>201</label>
    </ligand>
</feature>
<reference key="1">
    <citation type="journal article" date="2004" name="Proc. Natl. Acad. Sci. U.S.A.">
        <title>The diploid genome sequence of Candida albicans.</title>
        <authorList>
            <person name="Jones T."/>
            <person name="Federspiel N.A."/>
            <person name="Chibana H."/>
            <person name="Dungan J."/>
            <person name="Kalman S."/>
            <person name="Magee B.B."/>
            <person name="Newport G."/>
            <person name="Thorstenson Y.R."/>
            <person name="Agabian N."/>
            <person name="Magee P.T."/>
            <person name="Davis R.W."/>
            <person name="Scherer S."/>
        </authorList>
    </citation>
    <scope>NUCLEOTIDE SEQUENCE [LARGE SCALE GENOMIC DNA]</scope>
    <source>
        <strain>SC5314 / ATCC MYA-2876</strain>
    </source>
</reference>
<reference key="2">
    <citation type="journal article" date="2007" name="Genome Biol.">
        <title>Assembly of the Candida albicans genome into sixteen supercontigs aligned on the eight chromosomes.</title>
        <authorList>
            <person name="van het Hoog M."/>
            <person name="Rast T.J."/>
            <person name="Martchenko M."/>
            <person name="Grindle S."/>
            <person name="Dignard D."/>
            <person name="Hogues H."/>
            <person name="Cuomo C."/>
            <person name="Berriman M."/>
            <person name="Scherer S."/>
            <person name="Magee B.B."/>
            <person name="Whiteway M."/>
            <person name="Chibana H."/>
            <person name="Nantel A."/>
            <person name="Magee P.T."/>
        </authorList>
    </citation>
    <scope>GENOME REANNOTATION</scope>
    <source>
        <strain>SC5314 / ATCC MYA-2876</strain>
    </source>
</reference>
<reference key="3">
    <citation type="journal article" date="2013" name="Genome Biol.">
        <title>Assembly of a phased diploid Candida albicans genome facilitates allele-specific measurements and provides a simple model for repeat and indel structure.</title>
        <authorList>
            <person name="Muzzey D."/>
            <person name="Schwartz K."/>
            <person name="Weissman J.S."/>
            <person name="Sherlock G."/>
        </authorList>
    </citation>
    <scope>NUCLEOTIDE SEQUENCE [LARGE SCALE GENOMIC DNA]</scope>
    <scope>GENOME REANNOTATION</scope>
    <source>
        <strain>SC5314 / ATCC MYA-2876</strain>
    </source>
</reference>
<reference evidence="5 6 7" key="4">
    <citation type="journal article" date="2022" name="Sci. Adv.">
        <title>E-site drug specificity of the human pathogen Candida albicans ribosome.</title>
        <authorList>
            <person name="Zgadzay Y."/>
            <person name="Kolosova O."/>
            <person name="Stetsenko A."/>
            <person name="Wu C."/>
            <person name="Bruchlen D."/>
            <person name="Usachev K."/>
            <person name="Validov S."/>
            <person name="Jenner L."/>
            <person name="Rogachev A."/>
            <person name="Yusupova G."/>
            <person name="Sachs M.S."/>
            <person name="Guskov A."/>
            <person name="Yusupov M."/>
        </authorList>
    </citation>
    <scope>STRUCTURE BY ELECTRON MICROSCOPY (2.32 ANGSTROMS) OF THE 80S RIBOSOME</scope>
    <scope>SUBUNIT</scope>
    <scope>COFACTOR</scope>
    <scope>DOMAIN</scope>
</reference>
<dbReference type="EMBL" id="CP017623">
    <property type="protein sequence ID" value="AOW26668.1"/>
    <property type="molecule type" value="Genomic_DNA"/>
</dbReference>
<dbReference type="RefSeq" id="XP_019330689.1">
    <property type="nucleotide sequence ID" value="XM_019475144.1"/>
</dbReference>
<dbReference type="PDB" id="7PZY">
    <property type="method" value="EM"/>
    <property type="resolution" value="2.32 A"/>
    <property type="chains" value="AP=1-106"/>
</dbReference>
<dbReference type="PDB" id="7Q08">
    <property type="method" value="EM"/>
    <property type="resolution" value="2.56 A"/>
    <property type="chains" value="AP=1-106"/>
</dbReference>
<dbReference type="PDB" id="7Q0F">
    <property type="method" value="EM"/>
    <property type="resolution" value="2.64 A"/>
    <property type="chains" value="AP=1-106"/>
</dbReference>
<dbReference type="PDB" id="7Q0P">
    <property type="method" value="EM"/>
    <property type="resolution" value="2.77 A"/>
    <property type="chains" value="AP=1-106"/>
</dbReference>
<dbReference type="PDB" id="7Q0R">
    <property type="method" value="EM"/>
    <property type="resolution" value="2.67 A"/>
    <property type="chains" value="AP=1-106"/>
</dbReference>
<dbReference type="PDB" id="8C3A">
    <property type="method" value="X-ray"/>
    <property type="resolution" value="3.00 A"/>
    <property type="chains" value="AP/CJ=1-106"/>
</dbReference>
<dbReference type="PDB" id="8OGJ">
    <property type="method" value="EM"/>
    <property type="resolution" value="3.10 A"/>
    <property type="chains" value="AP=1-106"/>
</dbReference>
<dbReference type="PDB" id="8OH6">
    <property type="method" value="X-ray"/>
    <property type="resolution" value="3.35 A"/>
    <property type="chains" value="AP/CJ=1-106"/>
</dbReference>
<dbReference type="PDB" id="8OI5">
    <property type="method" value="X-ray"/>
    <property type="resolution" value="2.90 A"/>
    <property type="chains" value="AP/CJ=1-106"/>
</dbReference>
<dbReference type="PDB" id="8OJ3">
    <property type="method" value="X-ray"/>
    <property type="resolution" value="3.50 A"/>
    <property type="chains" value="AP/CJ=1-106"/>
</dbReference>
<dbReference type="PDBsum" id="7PZY"/>
<dbReference type="PDBsum" id="7Q08"/>
<dbReference type="PDBsum" id="7Q0F"/>
<dbReference type="PDBsum" id="7Q0P"/>
<dbReference type="PDBsum" id="7Q0R"/>
<dbReference type="PDBsum" id="8C3A"/>
<dbReference type="PDBsum" id="8OGJ"/>
<dbReference type="PDBsum" id="8OH6"/>
<dbReference type="PDBsum" id="8OI5"/>
<dbReference type="PDBsum" id="8OJ3"/>
<dbReference type="SMR" id="A0A1D8PEV4"/>
<dbReference type="FunCoup" id="A0A1D8PEV4">
    <property type="interactions" value="723"/>
</dbReference>
<dbReference type="STRING" id="237561.A0A1D8PEV4"/>
<dbReference type="EnsemblFungi" id="C1_10390C_A-T">
    <property type="protein sequence ID" value="C1_10390C_A-T-p1"/>
    <property type="gene ID" value="C1_10390C_A"/>
</dbReference>
<dbReference type="GeneID" id="30515041"/>
<dbReference type="KEGG" id="cal:CAALFM_C110390CA"/>
<dbReference type="CGD" id="CAL0000190451">
    <property type="gene designation" value="RPL42"/>
</dbReference>
<dbReference type="VEuPathDB" id="FungiDB:C1_10390C_A"/>
<dbReference type="eggNOG" id="KOG3464">
    <property type="taxonomic scope" value="Eukaryota"/>
</dbReference>
<dbReference type="InParanoid" id="A0A1D8PEV4"/>
<dbReference type="OMA" id="CKKHTIH"/>
<dbReference type="OrthoDB" id="2967263at2759"/>
<dbReference type="Proteomes" id="UP000000559">
    <property type="component" value="Chromosome 1"/>
</dbReference>
<dbReference type="GO" id="GO:0022625">
    <property type="term" value="C:cytosolic large ribosomal subunit"/>
    <property type="evidence" value="ECO:0000318"/>
    <property type="project" value="GO_Central"/>
</dbReference>
<dbReference type="GO" id="GO:0003735">
    <property type="term" value="F:structural constituent of ribosome"/>
    <property type="evidence" value="ECO:0007669"/>
    <property type="project" value="InterPro"/>
</dbReference>
<dbReference type="GO" id="GO:0006412">
    <property type="term" value="P:translation"/>
    <property type="evidence" value="ECO:0007669"/>
    <property type="project" value="InterPro"/>
</dbReference>
<dbReference type="FunFam" id="3.10.450.80:FF:000001">
    <property type="entry name" value="60S ribosomal protein L44"/>
    <property type="match status" value="1"/>
</dbReference>
<dbReference type="Gene3D" id="3.10.450.80">
    <property type="match status" value="1"/>
</dbReference>
<dbReference type="InterPro" id="IPR000552">
    <property type="entry name" value="Ribosomal_eL44"/>
</dbReference>
<dbReference type="InterPro" id="IPR053708">
    <property type="entry name" value="Ribosomal_LSU_eL42"/>
</dbReference>
<dbReference type="InterPro" id="IPR011332">
    <property type="entry name" value="Ribosomal_zn-bd"/>
</dbReference>
<dbReference type="PANTHER" id="PTHR10369">
    <property type="entry name" value="60S RIBOSOMAL PROTEIN L36A/L44"/>
    <property type="match status" value="1"/>
</dbReference>
<dbReference type="Pfam" id="PF00935">
    <property type="entry name" value="Ribosomal_L44"/>
    <property type="match status" value="1"/>
</dbReference>
<dbReference type="SUPFAM" id="SSF57829">
    <property type="entry name" value="Zn-binding ribosomal proteins"/>
    <property type="match status" value="1"/>
</dbReference>
<dbReference type="PROSITE" id="PS01172">
    <property type="entry name" value="RIBOSOMAL_L44E"/>
    <property type="match status" value="1"/>
</dbReference>
<gene>
    <name type="primary">RPL44</name>
    <name evidence="2" type="synonym">RPL42</name>
    <name type="ordered locus">orf19.4909.1</name>
    <name type="ORF">CAALFM_C110390CA</name>
</gene>
<evidence type="ECO:0000269" key="1">
    <source>
    </source>
</evidence>
<evidence type="ECO:0000303" key="2">
    <source>
    </source>
</evidence>
<evidence type="ECO:0000305" key="3"/>
<evidence type="ECO:0000305" key="4">
    <source>
    </source>
</evidence>
<evidence type="ECO:0007744" key="5">
    <source>
        <dbReference type="PDB" id="7PZY"/>
    </source>
</evidence>
<evidence type="ECO:0007744" key="6">
    <source>
        <dbReference type="PDB" id="7Q0F"/>
    </source>
</evidence>
<evidence type="ECO:0007744" key="7">
    <source>
        <dbReference type="PDB" id="7Q0P"/>
    </source>
</evidence>
<name>RL44_CANAL</name>
<keyword id="KW-0002">3D-structure</keyword>
<keyword id="KW-0963">Cytoplasm</keyword>
<keyword id="KW-1185">Reference proteome</keyword>
<keyword id="KW-0687">Ribonucleoprotein</keyword>
<keyword id="KW-0689">Ribosomal protein</keyword>
<keyword id="KW-0862">Zinc</keyword>
<sequence length="106" mass="12226">MVNVPKTRKTYCKGKECRKHTQHKVTQYKAGKASLFAQGKRRYDRKQSGYGGQTKQIFHKKAKTTKKVVLRLECVVCKTKAQLPLKRCKHFELGGDKKQKGQALQF</sequence>
<accession>A0A1D8PEV4</accession>